<protein>
    <recommendedName>
        <fullName>Uncharacterized protein Rv2645</fullName>
    </recommendedName>
</protein>
<accession>P9WL51</accession>
<accession>L0TCZ1</accession>
<accession>P71944</accession>
<name>Y2645_MYCTU</name>
<organism>
    <name type="scientific">Mycobacterium tuberculosis (strain ATCC 25618 / H37Rv)</name>
    <dbReference type="NCBI Taxonomy" id="83332"/>
    <lineage>
        <taxon>Bacteria</taxon>
        <taxon>Bacillati</taxon>
        <taxon>Actinomycetota</taxon>
        <taxon>Actinomycetes</taxon>
        <taxon>Mycobacteriales</taxon>
        <taxon>Mycobacteriaceae</taxon>
        <taxon>Mycobacterium</taxon>
        <taxon>Mycobacterium tuberculosis complex</taxon>
    </lineage>
</organism>
<proteinExistence type="evidence at protein level"/>
<sequence length="143" mass="15552">MTTTPRQPLFCAHADTNGDPGRCACGQQLADVGPATPPPPWCEPGTEPIWEQLTERYGGVTICQWTRYFPAGDPVAADVWIAADDRVVDGRVLRTQPAIHYTEPPVLGIGPAAARRLAAELLNAADTLDDGRRQLDDLGEHRR</sequence>
<reference key="1">
    <citation type="journal article" date="1998" name="Nature">
        <title>Deciphering the biology of Mycobacterium tuberculosis from the complete genome sequence.</title>
        <authorList>
            <person name="Cole S.T."/>
            <person name="Brosch R."/>
            <person name="Parkhill J."/>
            <person name="Garnier T."/>
            <person name="Churcher C.M."/>
            <person name="Harris D.E."/>
            <person name="Gordon S.V."/>
            <person name="Eiglmeier K."/>
            <person name="Gas S."/>
            <person name="Barry C.E. III"/>
            <person name="Tekaia F."/>
            <person name="Badcock K."/>
            <person name="Basham D."/>
            <person name="Brown D."/>
            <person name="Chillingworth T."/>
            <person name="Connor R."/>
            <person name="Davies R.M."/>
            <person name="Devlin K."/>
            <person name="Feltwell T."/>
            <person name="Gentles S."/>
            <person name="Hamlin N."/>
            <person name="Holroyd S."/>
            <person name="Hornsby T."/>
            <person name="Jagels K."/>
            <person name="Krogh A."/>
            <person name="McLean J."/>
            <person name="Moule S."/>
            <person name="Murphy L.D."/>
            <person name="Oliver S."/>
            <person name="Osborne J."/>
            <person name="Quail M.A."/>
            <person name="Rajandream M.A."/>
            <person name="Rogers J."/>
            <person name="Rutter S."/>
            <person name="Seeger K."/>
            <person name="Skelton S."/>
            <person name="Squares S."/>
            <person name="Squares R."/>
            <person name="Sulston J.E."/>
            <person name="Taylor K."/>
            <person name="Whitehead S."/>
            <person name="Barrell B.G."/>
        </authorList>
    </citation>
    <scope>NUCLEOTIDE SEQUENCE [LARGE SCALE GENOMIC DNA]</scope>
    <source>
        <strain>ATCC 25618 / H37Rv</strain>
    </source>
</reference>
<reference key="2">
    <citation type="journal article" date="2011" name="Mol. Cell. Proteomics">
        <title>Proteogenomic analysis of Mycobacterium tuberculosis by high resolution mass spectrometry.</title>
        <authorList>
            <person name="Kelkar D.S."/>
            <person name="Kumar D."/>
            <person name="Kumar P."/>
            <person name="Balakrishnan L."/>
            <person name="Muthusamy B."/>
            <person name="Yadav A.K."/>
            <person name="Shrivastava P."/>
            <person name="Marimuthu A."/>
            <person name="Anand S."/>
            <person name="Sundaram H."/>
            <person name="Kingsbury R."/>
            <person name="Harsha H.C."/>
            <person name="Nair B."/>
            <person name="Prasad T.S."/>
            <person name="Chauhan D.S."/>
            <person name="Katoch K."/>
            <person name="Katoch V.M."/>
            <person name="Kumar P."/>
            <person name="Chaerkady R."/>
            <person name="Ramachandran S."/>
            <person name="Dash D."/>
            <person name="Pandey A."/>
        </authorList>
    </citation>
    <scope>IDENTIFICATION BY MASS SPECTROMETRY [LARGE SCALE ANALYSIS]</scope>
    <source>
        <strain>ATCC 25618 / H37Rv</strain>
    </source>
</reference>
<feature type="chain" id="PRO_0000104080" description="Uncharacterized protein Rv2645">
    <location>
        <begin position="1"/>
        <end position="143"/>
    </location>
</feature>
<gene>
    <name type="ordered locus">Rv2645</name>
    <name type="ORF">MTCY441.15</name>
</gene>
<dbReference type="EMBL" id="AL123456">
    <property type="protein sequence ID" value="CCP45443.1"/>
    <property type="molecule type" value="Genomic_DNA"/>
</dbReference>
<dbReference type="PIR" id="A70965">
    <property type="entry name" value="A70965"/>
</dbReference>
<dbReference type="RefSeq" id="NP_217161.1">
    <property type="nucleotide sequence ID" value="NC_000962.3"/>
</dbReference>
<dbReference type="RefSeq" id="WP_003899409.1">
    <property type="nucleotide sequence ID" value="NZ_NVQJ01000077.1"/>
</dbReference>
<dbReference type="STRING" id="83332.Rv2645"/>
<dbReference type="PaxDb" id="83332-Rv2645"/>
<dbReference type="DNASU" id="887799"/>
<dbReference type="GeneID" id="887799"/>
<dbReference type="KEGG" id="mtu:Rv2645"/>
<dbReference type="KEGG" id="mtv:RVBD_2645"/>
<dbReference type="TubercuList" id="Rv2645"/>
<dbReference type="InParanoid" id="P9WL51"/>
<dbReference type="OrthoDB" id="4213844at2"/>
<dbReference type="Proteomes" id="UP000001584">
    <property type="component" value="Chromosome"/>
</dbReference>
<keyword id="KW-1185">Reference proteome</keyword>